<reference key="1">
    <citation type="journal article" date="2004" name="Proc. Natl. Acad. Sci. U.S.A.">
        <title>H5N1 influenza: a protean pandemic threat.</title>
        <authorList>
            <person name="Guan Y."/>
            <person name="Poon L.L.M."/>
            <person name="Cheung C.Y."/>
            <person name="Ellis T.M."/>
            <person name="Lim W."/>
            <person name="Lipatov A.S."/>
            <person name="Chan K.H."/>
            <person name="Sturm-Ramirez K.M."/>
            <person name="Cheung C.L."/>
            <person name="Leung Y.H.C."/>
            <person name="Yuen K.Y."/>
            <person name="Webster R.G."/>
            <person name="Peiris J.S.M."/>
        </authorList>
    </citation>
    <scope>NUCLEOTIDE SEQUENCE [GENOMIC RNA]</scope>
</reference>
<reference key="2">
    <citation type="submission" date="2008-03" db="EMBL/GenBank/DDBJ databases">
        <authorList>
            <person name="Guan Y."/>
            <person name="Poon L.L.M."/>
            <person name="Cheung C.Y."/>
            <person name="Ellis T.M."/>
            <person name="Lim W."/>
            <person name="Lipatov A.S."/>
            <person name="Chan K.H."/>
            <person name="Sturm-Ramirez K.M."/>
            <person name="Cheung C.L."/>
            <person name="Leung Y.H.C."/>
            <person name="Yuen K.Y."/>
            <person name="Webster R.G."/>
            <person name="Peiris J.S.M."/>
        </authorList>
    </citation>
    <scope>SEQUENCE REVISION</scope>
</reference>
<sequence length="498" mass="56334">MASQGTKRSYEQMETGGERQNATEIRASVGRMVSGIGRFYIQMCTELKLSDYEGRLIQNSITIERMVLSAFDERRNRYLEEHPSAGKDPKKTGGPIYRRRDGKWVRELILYDKEEIRRIWRQANNGEDATAGLTHLMIWHSNLNDATYQRTRALVRTGMDPRMCSLMQGSTLPRRSGAAGAAVKGVGTMVMELIRMIKRGINDRNFWRGENGRRTRIAYERMCNILKGKFQTAAQRAMMDQVRESRNPGNAEIEDLIFLARSALILRGSVAHKSCLPACVYGLAVASGYDFEREGYSLVGIDPFRLLQNSQVFSLIRPNENPAHKSQLVWMACHSAAFEDLRVSSFIRGTRVVPRGQLSTRGVQIASNENMEAMDSNTLELRSRYWAIRTRSGGNTNQQRASAGQISVQPTFSVQRNLPFERATIMAAFTGNTEGRTSDMRTEIIRMMESARPEDVSFQGRGVFELSDEKATNPIVPSFDMNNEGSYFFGDNAEEYDN</sequence>
<name>NCAP_I02A5</name>
<keyword id="KW-0167">Capsid protein</keyword>
<keyword id="KW-1139">Helical capsid protein</keyword>
<keyword id="KW-1048">Host nucleus</keyword>
<keyword id="KW-0945">Host-virus interaction</keyword>
<keyword id="KW-0687">Ribonucleoprotein</keyword>
<keyword id="KW-0694">RNA-binding</keyword>
<keyword id="KW-0543">Viral nucleoprotein</keyword>
<keyword id="KW-1163">Viral penetration into host nucleus</keyword>
<keyword id="KW-0946">Virion</keyword>
<keyword id="KW-1160">Virus entry into host cell</keyword>
<accession>Q6J8B1</accession>
<feature type="chain" id="PRO_0000310923" description="Nucleoprotein">
    <location>
        <begin position="1"/>
        <end position="498"/>
    </location>
</feature>
<feature type="region of interest" description="Disordered" evidence="2">
    <location>
        <begin position="1"/>
        <end position="21"/>
    </location>
</feature>
<feature type="short sequence motif" description="Unconventional nuclear localization signal" evidence="1">
    <location>
        <begin position="1"/>
        <end position="18"/>
    </location>
</feature>
<feature type="short sequence motif" description="Bipartite nuclear localization signal" evidence="1">
    <location>
        <begin position="198"/>
        <end position="216"/>
    </location>
</feature>
<organism>
    <name type="scientific">Influenza A virus (strain A/Chicken/Hong Kong/96.1/2002 H5N1 genotype Y)</name>
    <dbReference type="NCBI Taxonomy" id="279803"/>
    <lineage>
        <taxon>Viruses</taxon>
        <taxon>Riboviria</taxon>
        <taxon>Orthornavirae</taxon>
        <taxon>Negarnaviricota</taxon>
        <taxon>Polyploviricotina</taxon>
        <taxon>Insthoviricetes</taxon>
        <taxon>Articulavirales</taxon>
        <taxon>Orthomyxoviridae</taxon>
        <taxon>Alphainfluenzavirus</taxon>
        <taxon>Alphainfluenzavirus influenzae</taxon>
        <taxon>Influenza A virus</taxon>
    </lineage>
</organism>
<comment type="function">
    <text evidence="1">Encapsidates the negative strand viral RNA, protecting it from nucleases. The encapsidated genomic RNA is termed the ribonucleoprotein (RNP) and serves as template for transcription and replication. The RNP needs to be localized in the host nucleus to start an infectious cycle, but is too large to diffuse through the nuclear pore complex. NP comprises at least 2 nuclear localization signals that are responsible for the active RNP import into the nucleus through cellular importin alpha/beta pathway. Later in the infection, nclear export of RNPs are mediated through viral proteins NEP interacting with M1 which binds nucleoproteins. It is possible that nucleoprotein binds directly host exportin-1/XPO1 and plays an active role in RNPs nuclear export. M1 interaction with RNP seems to hide nucleoprotein's nuclear localization signals. Soon after a virion infects a new cell, M1 dissociates from the RNP under acidification of the virion driven by M2 protein. Dissociation of M1 from RNP unmasks nucleoprotein's nuclear localization signals, targeting the RNP to the nucleus.</text>
</comment>
<comment type="subunit">
    <text evidence="1">Homomultimerizes to form the nucleocapsid. May bind host exportin-1/XPO1. Binds to viral genomic RNA. Protein-RNA contacts are mediated by a combination of electrostatic interactions between positively charged residues and the phosphate backbone and planar interactions between aromatic side chains and bases.</text>
</comment>
<comment type="subcellular location">
    <subcellularLocation>
        <location evidence="1">Virion</location>
    </subcellularLocation>
    <subcellularLocation>
        <location evidence="1">Host nucleus</location>
    </subcellularLocation>
</comment>
<comment type="PTM">
    <text evidence="1">Late in virus-infected cells, may be cleaved from a 56-kDa protein to a 53-kDa protein by a cellular caspase. This cleavage might be a marker for the onset of apoptosis in infected cells or have a specific function in virus host interaction.</text>
</comment>
<comment type="similarity">
    <text evidence="1">Belongs to the influenza viruses nucleoprotein family.</text>
</comment>
<protein>
    <recommendedName>
        <fullName evidence="1">Nucleoprotein</fullName>
    </recommendedName>
    <alternativeName>
        <fullName evidence="1">Nucleocapsid protein</fullName>
        <shortName evidence="1">Protein N</shortName>
    </alternativeName>
</protein>
<evidence type="ECO:0000255" key="1">
    <source>
        <dbReference type="HAMAP-Rule" id="MF_04070"/>
    </source>
</evidence>
<evidence type="ECO:0000256" key="2">
    <source>
        <dbReference type="SAM" id="MobiDB-lite"/>
    </source>
</evidence>
<proteinExistence type="inferred from homology"/>
<organismHost>
    <name type="scientific">Aves</name>
    <dbReference type="NCBI Taxonomy" id="8782"/>
</organismHost>
<organismHost>
    <name type="scientific">Felis catus</name>
    <name type="common">Cat</name>
    <name type="synonym">Felis silvestris catus</name>
    <dbReference type="NCBI Taxonomy" id="9685"/>
</organismHost>
<organismHost>
    <name type="scientific">Homo sapiens</name>
    <name type="common">Human</name>
    <dbReference type="NCBI Taxonomy" id="9606"/>
</organismHost>
<organismHost>
    <name type="scientific">Panthera pardus</name>
    <name type="common">Leopard</name>
    <name type="synonym">Felis pardus</name>
    <dbReference type="NCBI Taxonomy" id="9691"/>
</organismHost>
<organismHost>
    <name type="scientific">Panthera tigris</name>
    <name type="common">Tiger</name>
    <dbReference type="NCBI Taxonomy" id="9694"/>
</organismHost>
<organismHost>
    <name type="scientific">Sus scrofa</name>
    <name type="common">Pig</name>
    <dbReference type="NCBI Taxonomy" id="9823"/>
</organismHost>
<gene>
    <name evidence="1" type="primary">NP</name>
</gene>
<dbReference type="EMBL" id="AY575914">
    <property type="protein sequence ID" value="AAT39110.2"/>
    <property type="molecule type" value="Genomic_DNA"/>
</dbReference>
<dbReference type="SMR" id="Q6J8B1"/>
<dbReference type="GO" id="GO:0019029">
    <property type="term" value="C:helical viral capsid"/>
    <property type="evidence" value="ECO:0007669"/>
    <property type="project" value="UniProtKB-UniRule"/>
</dbReference>
<dbReference type="GO" id="GO:0043657">
    <property type="term" value="C:host cell"/>
    <property type="evidence" value="ECO:0007669"/>
    <property type="project" value="GOC"/>
</dbReference>
<dbReference type="GO" id="GO:0042025">
    <property type="term" value="C:host cell nucleus"/>
    <property type="evidence" value="ECO:0007669"/>
    <property type="project" value="UniProtKB-SubCell"/>
</dbReference>
<dbReference type="GO" id="GO:1990904">
    <property type="term" value="C:ribonucleoprotein complex"/>
    <property type="evidence" value="ECO:0007669"/>
    <property type="project" value="UniProtKB-KW"/>
</dbReference>
<dbReference type="GO" id="GO:0019013">
    <property type="term" value="C:viral nucleocapsid"/>
    <property type="evidence" value="ECO:0007669"/>
    <property type="project" value="UniProtKB-UniRule"/>
</dbReference>
<dbReference type="GO" id="GO:0003723">
    <property type="term" value="F:RNA binding"/>
    <property type="evidence" value="ECO:0007669"/>
    <property type="project" value="UniProtKB-UniRule"/>
</dbReference>
<dbReference type="GO" id="GO:0005198">
    <property type="term" value="F:structural molecule activity"/>
    <property type="evidence" value="ECO:0007669"/>
    <property type="project" value="UniProtKB-UniRule"/>
</dbReference>
<dbReference type="GO" id="GO:0046718">
    <property type="term" value="P:symbiont entry into host cell"/>
    <property type="evidence" value="ECO:0007669"/>
    <property type="project" value="UniProtKB-KW"/>
</dbReference>
<dbReference type="GO" id="GO:0075732">
    <property type="term" value="P:viral penetration into host nucleus"/>
    <property type="evidence" value="ECO:0007669"/>
    <property type="project" value="UniProtKB-UniRule"/>
</dbReference>
<dbReference type="HAMAP" id="MF_04070">
    <property type="entry name" value="INFV_NCAP"/>
    <property type="match status" value="1"/>
</dbReference>
<dbReference type="InterPro" id="IPR002141">
    <property type="entry name" value="Flu_NP"/>
</dbReference>
<dbReference type="Pfam" id="PF00506">
    <property type="entry name" value="Flu_NP"/>
    <property type="match status" value="1"/>
</dbReference>
<dbReference type="SUPFAM" id="SSF161003">
    <property type="entry name" value="flu NP-like"/>
    <property type="match status" value="1"/>
</dbReference>